<keyword id="KW-0687">Ribonucleoprotein</keyword>
<keyword id="KW-0689">Ribosomal protein</keyword>
<keyword id="KW-0694">RNA-binding</keyword>
<keyword id="KW-0699">rRNA-binding</keyword>
<accession>C1FMV1</accession>
<organism>
    <name type="scientific">Clostridium botulinum (strain Kyoto / Type A2)</name>
    <dbReference type="NCBI Taxonomy" id="536232"/>
    <lineage>
        <taxon>Bacteria</taxon>
        <taxon>Bacillati</taxon>
        <taxon>Bacillota</taxon>
        <taxon>Clostridia</taxon>
        <taxon>Eubacteriales</taxon>
        <taxon>Clostridiaceae</taxon>
        <taxon>Clostridium</taxon>
    </lineage>
</organism>
<comment type="function">
    <text evidence="1">One of the primary rRNA binding proteins, it binds directly near the 3'-end of the 23S rRNA, where it nucleates assembly of the 50S subunit.</text>
</comment>
<comment type="subunit">
    <text evidence="1">Part of the 50S ribosomal subunit. Forms a cluster with proteins L14 and L19.</text>
</comment>
<comment type="similarity">
    <text evidence="1">Belongs to the universal ribosomal protein uL3 family.</text>
</comment>
<protein>
    <recommendedName>
        <fullName evidence="1">Large ribosomal subunit protein uL3</fullName>
    </recommendedName>
    <alternativeName>
        <fullName evidence="3">50S ribosomal protein L3</fullName>
    </alternativeName>
</protein>
<sequence length="209" mass="22872">MKKAILGKKLGMTQIFNENGKVIPVTVIEAGPCTVIQKKTVEKDGYEAIQVAFGDIREKLRNKPVKGHFAKAGVSVKRHIKEFKLEDLNSLEIGQEIKADVFEAGERVDISGVSKGKGFQGTIRRWNAHRGPMSHGSKFHRAVGSMGASSDPSRTFKNKRMPGHMGNVNTTVLNLEVVRIIPEKNLILIKGGVPGPNKGLVQIRNTVKA</sequence>
<feature type="chain" id="PRO_1000165877" description="Large ribosomal subunit protein uL3">
    <location>
        <begin position="1"/>
        <end position="209"/>
    </location>
</feature>
<feature type="region of interest" description="Disordered" evidence="2">
    <location>
        <begin position="141"/>
        <end position="163"/>
    </location>
</feature>
<dbReference type="EMBL" id="CP001581">
    <property type="protein sequence ID" value="ACO83500.1"/>
    <property type="molecule type" value="Genomic_DNA"/>
</dbReference>
<dbReference type="RefSeq" id="WP_012703722.1">
    <property type="nucleotide sequence ID" value="NC_012563.1"/>
</dbReference>
<dbReference type="SMR" id="C1FMV1"/>
<dbReference type="KEGG" id="cby:CLM_3948"/>
<dbReference type="eggNOG" id="COG0087">
    <property type="taxonomic scope" value="Bacteria"/>
</dbReference>
<dbReference type="HOGENOM" id="CLU_044142_4_1_9"/>
<dbReference type="Proteomes" id="UP000001374">
    <property type="component" value="Chromosome"/>
</dbReference>
<dbReference type="GO" id="GO:0022625">
    <property type="term" value="C:cytosolic large ribosomal subunit"/>
    <property type="evidence" value="ECO:0007669"/>
    <property type="project" value="TreeGrafter"/>
</dbReference>
<dbReference type="GO" id="GO:0019843">
    <property type="term" value="F:rRNA binding"/>
    <property type="evidence" value="ECO:0007669"/>
    <property type="project" value="UniProtKB-UniRule"/>
</dbReference>
<dbReference type="GO" id="GO:0003735">
    <property type="term" value="F:structural constituent of ribosome"/>
    <property type="evidence" value="ECO:0007669"/>
    <property type="project" value="InterPro"/>
</dbReference>
<dbReference type="GO" id="GO:0006412">
    <property type="term" value="P:translation"/>
    <property type="evidence" value="ECO:0007669"/>
    <property type="project" value="UniProtKB-UniRule"/>
</dbReference>
<dbReference type="FunFam" id="2.40.30.10:FF:000004">
    <property type="entry name" value="50S ribosomal protein L3"/>
    <property type="match status" value="1"/>
</dbReference>
<dbReference type="FunFam" id="3.30.160.810:FF:000001">
    <property type="entry name" value="50S ribosomal protein L3"/>
    <property type="match status" value="1"/>
</dbReference>
<dbReference type="Gene3D" id="3.30.160.810">
    <property type="match status" value="1"/>
</dbReference>
<dbReference type="Gene3D" id="2.40.30.10">
    <property type="entry name" value="Translation factors"/>
    <property type="match status" value="1"/>
</dbReference>
<dbReference type="HAMAP" id="MF_01325_B">
    <property type="entry name" value="Ribosomal_uL3_B"/>
    <property type="match status" value="1"/>
</dbReference>
<dbReference type="InterPro" id="IPR000597">
    <property type="entry name" value="Ribosomal_uL3"/>
</dbReference>
<dbReference type="InterPro" id="IPR019927">
    <property type="entry name" value="Ribosomal_uL3_bac/org-type"/>
</dbReference>
<dbReference type="InterPro" id="IPR019926">
    <property type="entry name" value="Ribosomal_uL3_CS"/>
</dbReference>
<dbReference type="InterPro" id="IPR009000">
    <property type="entry name" value="Transl_B-barrel_sf"/>
</dbReference>
<dbReference type="NCBIfam" id="TIGR03625">
    <property type="entry name" value="L3_bact"/>
    <property type="match status" value="1"/>
</dbReference>
<dbReference type="PANTHER" id="PTHR11229">
    <property type="entry name" value="50S RIBOSOMAL PROTEIN L3"/>
    <property type="match status" value="1"/>
</dbReference>
<dbReference type="PANTHER" id="PTHR11229:SF16">
    <property type="entry name" value="LARGE RIBOSOMAL SUBUNIT PROTEIN UL3C"/>
    <property type="match status" value="1"/>
</dbReference>
<dbReference type="Pfam" id="PF00297">
    <property type="entry name" value="Ribosomal_L3"/>
    <property type="match status" value="1"/>
</dbReference>
<dbReference type="SUPFAM" id="SSF50447">
    <property type="entry name" value="Translation proteins"/>
    <property type="match status" value="1"/>
</dbReference>
<dbReference type="PROSITE" id="PS00474">
    <property type="entry name" value="RIBOSOMAL_L3"/>
    <property type="match status" value="1"/>
</dbReference>
<evidence type="ECO:0000255" key="1">
    <source>
        <dbReference type="HAMAP-Rule" id="MF_01325"/>
    </source>
</evidence>
<evidence type="ECO:0000256" key="2">
    <source>
        <dbReference type="SAM" id="MobiDB-lite"/>
    </source>
</evidence>
<evidence type="ECO:0000305" key="3"/>
<proteinExistence type="inferred from homology"/>
<reference key="1">
    <citation type="submission" date="2008-10" db="EMBL/GenBank/DDBJ databases">
        <title>Genome sequence of Clostridium botulinum A2 Kyoto.</title>
        <authorList>
            <person name="Shrivastava S."/>
            <person name="Brinkac L.M."/>
            <person name="Brown J.L."/>
            <person name="Bruce D."/>
            <person name="Detter C.C."/>
            <person name="Johnson E.A."/>
            <person name="Munk C.A."/>
            <person name="Smith L.A."/>
            <person name="Smith T.J."/>
            <person name="Sutton G."/>
            <person name="Brettin T.S."/>
        </authorList>
    </citation>
    <scope>NUCLEOTIDE SEQUENCE [LARGE SCALE GENOMIC DNA]</scope>
    <source>
        <strain>Kyoto / Type A2</strain>
    </source>
</reference>
<gene>
    <name evidence="1" type="primary">rplC</name>
    <name type="ordered locus">CLM_3948</name>
</gene>
<name>RL3_CLOBJ</name>